<keyword id="KW-0963">Cytoplasm</keyword>
<keyword id="KW-0238">DNA-binding</keyword>
<proteinExistence type="inferred from homology"/>
<reference key="1">
    <citation type="submission" date="2008-01" db="EMBL/GenBank/DDBJ databases">
        <title>Complete sequence of chromosome of Caulobacter sp. K31.</title>
        <authorList>
            <consortium name="US DOE Joint Genome Institute"/>
            <person name="Copeland A."/>
            <person name="Lucas S."/>
            <person name="Lapidus A."/>
            <person name="Barry K."/>
            <person name="Glavina del Rio T."/>
            <person name="Dalin E."/>
            <person name="Tice H."/>
            <person name="Pitluck S."/>
            <person name="Bruce D."/>
            <person name="Goodwin L."/>
            <person name="Thompson L.S."/>
            <person name="Brettin T."/>
            <person name="Detter J.C."/>
            <person name="Han C."/>
            <person name="Schmutz J."/>
            <person name="Larimer F."/>
            <person name="Land M."/>
            <person name="Hauser L."/>
            <person name="Kyrpides N."/>
            <person name="Kim E."/>
            <person name="Stephens C."/>
            <person name="Richardson P."/>
        </authorList>
    </citation>
    <scope>NUCLEOTIDE SEQUENCE [LARGE SCALE GENOMIC DNA]</scope>
    <source>
        <strain>K31</strain>
    </source>
</reference>
<feature type="chain" id="PRO_1000078750" description="Nucleoid-associated protein Caul_4574">
    <location>
        <begin position="1"/>
        <end position="109"/>
    </location>
</feature>
<organism>
    <name type="scientific">Caulobacter sp. (strain K31)</name>
    <dbReference type="NCBI Taxonomy" id="366602"/>
    <lineage>
        <taxon>Bacteria</taxon>
        <taxon>Pseudomonadati</taxon>
        <taxon>Pseudomonadota</taxon>
        <taxon>Alphaproteobacteria</taxon>
        <taxon>Caulobacterales</taxon>
        <taxon>Caulobacteraceae</taxon>
        <taxon>Caulobacter</taxon>
    </lineage>
</organism>
<evidence type="ECO:0000255" key="1">
    <source>
        <dbReference type="HAMAP-Rule" id="MF_00274"/>
    </source>
</evidence>
<sequence>MKDLGGLMKQAQAMQQKLADAQARLAELTVEGTSGGGMVTVTLRGNGELAKVVLDESLIEPGEGEVIADLIVAAHADAKKKLDAQQAQLMQEAAGPMAGMMGGLPGMKF</sequence>
<protein>
    <recommendedName>
        <fullName evidence="1">Nucleoid-associated protein Caul_4574</fullName>
    </recommendedName>
</protein>
<accession>B0T1T3</accession>
<dbReference type="EMBL" id="CP000927">
    <property type="protein sequence ID" value="ABZ73694.1"/>
    <property type="molecule type" value="Genomic_DNA"/>
</dbReference>
<dbReference type="SMR" id="B0T1T3"/>
<dbReference type="STRING" id="366602.Caul_4574"/>
<dbReference type="KEGG" id="cak:Caul_4574"/>
<dbReference type="eggNOG" id="COG0718">
    <property type="taxonomic scope" value="Bacteria"/>
</dbReference>
<dbReference type="HOGENOM" id="CLU_140930_4_1_5"/>
<dbReference type="OrthoDB" id="9803080at2"/>
<dbReference type="GO" id="GO:0043590">
    <property type="term" value="C:bacterial nucleoid"/>
    <property type="evidence" value="ECO:0007669"/>
    <property type="project" value="UniProtKB-UniRule"/>
</dbReference>
<dbReference type="GO" id="GO:0005829">
    <property type="term" value="C:cytosol"/>
    <property type="evidence" value="ECO:0007669"/>
    <property type="project" value="TreeGrafter"/>
</dbReference>
<dbReference type="GO" id="GO:0003677">
    <property type="term" value="F:DNA binding"/>
    <property type="evidence" value="ECO:0007669"/>
    <property type="project" value="UniProtKB-UniRule"/>
</dbReference>
<dbReference type="Gene3D" id="3.30.1310.10">
    <property type="entry name" value="Nucleoid-associated protein YbaB-like domain"/>
    <property type="match status" value="1"/>
</dbReference>
<dbReference type="HAMAP" id="MF_00274">
    <property type="entry name" value="DNA_YbaB_EbfC"/>
    <property type="match status" value="1"/>
</dbReference>
<dbReference type="InterPro" id="IPR036894">
    <property type="entry name" value="YbaB-like_sf"/>
</dbReference>
<dbReference type="InterPro" id="IPR004401">
    <property type="entry name" value="YbaB/EbfC"/>
</dbReference>
<dbReference type="NCBIfam" id="TIGR00103">
    <property type="entry name" value="DNA_YbaB_EbfC"/>
    <property type="match status" value="1"/>
</dbReference>
<dbReference type="NCBIfam" id="NF011218">
    <property type="entry name" value="PRK14625.1"/>
    <property type="match status" value="1"/>
</dbReference>
<dbReference type="PANTHER" id="PTHR33449">
    <property type="entry name" value="NUCLEOID-ASSOCIATED PROTEIN YBAB"/>
    <property type="match status" value="1"/>
</dbReference>
<dbReference type="PANTHER" id="PTHR33449:SF1">
    <property type="entry name" value="NUCLEOID-ASSOCIATED PROTEIN YBAB"/>
    <property type="match status" value="1"/>
</dbReference>
<dbReference type="Pfam" id="PF02575">
    <property type="entry name" value="YbaB_DNA_bd"/>
    <property type="match status" value="1"/>
</dbReference>
<dbReference type="PIRSF" id="PIRSF004555">
    <property type="entry name" value="UCP004555"/>
    <property type="match status" value="1"/>
</dbReference>
<dbReference type="SUPFAM" id="SSF82607">
    <property type="entry name" value="YbaB-like"/>
    <property type="match status" value="1"/>
</dbReference>
<comment type="function">
    <text evidence="1">Binds to DNA and alters its conformation. May be involved in regulation of gene expression, nucleoid organization and DNA protection.</text>
</comment>
<comment type="subunit">
    <text evidence="1">Homodimer.</text>
</comment>
<comment type="subcellular location">
    <subcellularLocation>
        <location evidence="1">Cytoplasm</location>
        <location evidence="1">Nucleoid</location>
    </subcellularLocation>
</comment>
<comment type="similarity">
    <text evidence="1">Belongs to the YbaB/EbfC family.</text>
</comment>
<gene>
    <name type="ordered locus">Caul_4574</name>
</gene>
<name>Y4574_CAUSK</name>